<organism>
    <name type="scientific">Phyla dulcis</name>
    <name type="common">Aztec sweet herb</name>
    <name type="synonym">Lippia dulcis</name>
    <dbReference type="NCBI Taxonomy" id="542674"/>
    <lineage>
        <taxon>Eukaryota</taxon>
        <taxon>Viridiplantae</taxon>
        <taxon>Streptophyta</taxon>
        <taxon>Embryophyta</taxon>
        <taxon>Tracheophyta</taxon>
        <taxon>Spermatophyta</taxon>
        <taxon>Magnoliopsida</taxon>
        <taxon>eudicotyledons</taxon>
        <taxon>Gunneridae</taxon>
        <taxon>Pentapetalae</taxon>
        <taxon>asterids</taxon>
        <taxon>lamiids</taxon>
        <taxon>Lamiales</taxon>
        <taxon>Verbenaceae</taxon>
        <taxon>Lantaneae</taxon>
        <taxon>Phyla</taxon>
    </lineage>
</organism>
<proteinExistence type="evidence at protein level"/>
<sequence>MEARRSGNFKASIWDDDFLQSLTSPYTAKEYLKQADKLKWQVKVIIKETKQRLDQLDLIDNIQRLGISHHFRDEIQRVLQNIYEKMRVECPDRMLMEKDLYSTSLQFRLLRQHGYHVSQDVFCSFMDGAGNFQAVDDLKGILALYEASFLSREGENILGSARDFSTRHLKQKLEEITDPILAEKIRRALELPLHWRLQKLEAIWFINIYESRFDANLILLQLAKLEFNMVQAQYQEDLKWLSRWYKETGLPEKMNFARDRLAECFLWALGFIPEAHLGQARKILTKIAVLIVIMDDFYDIYGTLDEIKVFTEELQRWDINALDNLPEYMRICFLAIFNTANEIAYDILRDQGINIISNLRRLWAELGRVYYTEAKWYHSGYFPSTEEYLNVAWISITGPVLLFHAYFSIMNPIDMKELQYLEQYPGIIRWPSTVLRLADDLGTASDEIKRGDVPKSIQCYMHETGCSEEEAREYVKQLIDTTLKKMNKEILMEKPTNDFGATAMNLARISLFFYQYGDGFGVPHNQTKENLVSLIVKPICLT</sequence>
<comment type="function">
    <text evidence="2">Sesquiterpene synthase converting farnesyl diphosphate to trans-alpha-bergamotene as the major product.</text>
</comment>
<comment type="catalytic activity">
    <reaction evidence="2">
        <text>(2E,6E)-farnesyl diphosphate = (1S,5S,6R)-alpha-bergamotene + diphosphate</text>
        <dbReference type="Rhea" id="RHEA:31427"/>
        <dbReference type="ChEBI" id="CHEBI:33019"/>
        <dbReference type="ChEBI" id="CHEBI:62756"/>
        <dbReference type="ChEBI" id="CHEBI:175763"/>
        <dbReference type="EC" id="4.2.3.81"/>
    </reaction>
</comment>
<comment type="cofactor">
    <cofactor evidence="1">
        <name>Mg(2+)</name>
        <dbReference type="ChEBI" id="CHEBI:18420"/>
    </cofactor>
    <text evidence="1">Binds 3 Mg(2+) ions per subunit.</text>
</comment>
<comment type="pathway">
    <text>Secondary metabolite biosynthesis; terpenoid biosynthesis.</text>
</comment>
<comment type="domain">
    <text evidence="1">The Asp-Asp-Xaa-Xaa-Asp/Glu (DDXXD/E) motif is important for the catalytic activity, presumably through binding to Mg(2+).</text>
</comment>
<comment type="similarity">
    <text evidence="3">Belongs to the terpene synthase family.</text>
</comment>
<evidence type="ECO:0000250" key="1"/>
<evidence type="ECO:0000269" key="2">
    <source>
    </source>
</evidence>
<evidence type="ECO:0000305" key="3"/>
<reference key="1">
    <citation type="journal article" date="2012" name="Arch. Biochem. Biophys.">
        <title>Molecular cloning and characterization of (+)-epi-alpha-bisabolol synthase, catalyzing the first step in the biosynthesis of the natural sweetener, hernandulcin, in Lippia dulcis.</title>
        <authorList>
            <person name="Attia M."/>
            <person name="Kim S.U."/>
            <person name="Ro D.K."/>
        </authorList>
    </citation>
    <scope>NUCLEOTIDE SEQUENCE [MRNA]</scope>
    <scope>FUNCTION</scope>
    <scope>CATALYTIC ACTIVITY</scope>
</reference>
<accession>J7LQ09</accession>
<keyword id="KW-0456">Lyase</keyword>
<keyword id="KW-0460">Magnesium</keyword>
<keyword id="KW-0479">Metal-binding</keyword>
<feature type="chain" id="PRO_0000421954" description="Trans-alpha-bergamotene synthase">
    <location>
        <begin position="1"/>
        <end position="542"/>
    </location>
</feature>
<feature type="short sequence motif" description="DDXXD motif">
    <location>
        <begin position="295"/>
        <end position="299"/>
    </location>
</feature>
<feature type="binding site" evidence="1">
    <location>
        <position position="295"/>
    </location>
    <ligand>
        <name>Mg(2+)</name>
        <dbReference type="ChEBI" id="CHEBI:18420"/>
        <label>1</label>
    </ligand>
</feature>
<feature type="binding site" evidence="1">
    <location>
        <position position="295"/>
    </location>
    <ligand>
        <name>Mg(2+)</name>
        <dbReference type="ChEBI" id="CHEBI:18420"/>
        <label>2</label>
    </ligand>
</feature>
<feature type="binding site" evidence="1">
    <location>
        <position position="299"/>
    </location>
    <ligand>
        <name>Mg(2+)</name>
        <dbReference type="ChEBI" id="CHEBI:18420"/>
        <label>1</label>
    </ligand>
</feature>
<feature type="binding site" evidence="1">
    <location>
        <position position="299"/>
    </location>
    <ligand>
        <name>Mg(2+)</name>
        <dbReference type="ChEBI" id="CHEBI:18420"/>
        <label>2</label>
    </ligand>
</feature>
<feature type="binding site" evidence="1">
    <location>
        <position position="439"/>
    </location>
    <ligand>
        <name>Mg(2+)</name>
        <dbReference type="ChEBI" id="CHEBI:18420"/>
        <label>3</label>
    </ligand>
</feature>
<feature type="binding site" evidence="1">
    <location>
        <position position="443"/>
    </location>
    <ligand>
        <name>Mg(2+)</name>
        <dbReference type="ChEBI" id="CHEBI:18420"/>
        <label>3</label>
    </ligand>
</feature>
<feature type="binding site" evidence="1">
    <location>
        <position position="447"/>
    </location>
    <ligand>
        <name>Mg(2+)</name>
        <dbReference type="ChEBI" id="CHEBI:18420"/>
        <label>3</label>
    </ligand>
</feature>
<name>TPS7_PHYDL</name>
<protein>
    <recommendedName>
        <fullName>Trans-alpha-bergamotene synthase</fullName>
        <ecNumber>4.2.3.81</ecNumber>
    </recommendedName>
    <alternativeName>
        <fullName>Terpene synthase 7</fullName>
        <shortName>LdTPS7</shortName>
    </alternativeName>
</protein>
<dbReference type="EC" id="4.2.3.81"/>
<dbReference type="EMBL" id="JQ731635">
    <property type="protein sequence ID" value="AFR23371.1"/>
    <property type="molecule type" value="mRNA"/>
</dbReference>
<dbReference type="SMR" id="J7LQ09"/>
<dbReference type="UniPathway" id="UPA00213"/>
<dbReference type="GO" id="GO:0000287">
    <property type="term" value="F:magnesium ion binding"/>
    <property type="evidence" value="ECO:0007669"/>
    <property type="project" value="InterPro"/>
</dbReference>
<dbReference type="GO" id="GO:0010334">
    <property type="term" value="F:sesquiterpene synthase activity"/>
    <property type="evidence" value="ECO:0000314"/>
    <property type="project" value="UniProtKB"/>
</dbReference>
<dbReference type="GO" id="GO:1901940">
    <property type="term" value="P:(-)-exo-alpha-bergamotene biosynthetic process"/>
    <property type="evidence" value="ECO:0000314"/>
    <property type="project" value="UniProtKB"/>
</dbReference>
<dbReference type="GO" id="GO:0016102">
    <property type="term" value="P:diterpenoid biosynthetic process"/>
    <property type="evidence" value="ECO:0007669"/>
    <property type="project" value="InterPro"/>
</dbReference>
<dbReference type="GO" id="GO:0045339">
    <property type="term" value="P:farnesyl diphosphate catabolic process"/>
    <property type="evidence" value="ECO:0000314"/>
    <property type="project" value="UniProtKB"/>
</dbReference>
<dbReference type="CDD" id="cd00684">
    <property type="entry name" value="Terpene_cyclase_plant_C1"/>
    <property type="match status" value="1"/>
</dbReference>
<dbReference type="FunFam" id="1.10.600.10:FF:000007">
    <property type="entry name" value="Isoprene synthase, chloroplastic"/>
    <property type="match status" value="1"/>
</dbReference>
<dbReference type="FunFam" id="1.50.10.130:FF:000001">
    <property type="entry name" value="Isoprene synthase, chloroplastic"/>
    <property type="match status" value="1"/>
</dbReference>
<dbReference type="Gene3D" id="1.10.600.10">
    <property type="entry name" value="Farnesyl Diphosphate Synthase"/>
    <property type="match status" value="1"/>
</dbReference>
<dbReference type="Gene3D" id="1.50.10.130">
    <property type="entry name" value="Terpene synthase, N-terminal domain"/>
    <property type="match status" value="1"/>
</dbReference>
<dbReference type="InterPro" id="IPR008949">
    <property type="entry name" value="Isoprenoid_synthase_dom_sf"/>
</dbReference>
<dbReference type="InterPro" id="IPR034741">
    <property type="entry name" value="Terpene_cyclase-like_1_C"/>
</dbReference>
<dbReference type="InterPro" id="IPR044814">
    <property type="entry name" value="Terpene_cyclase_plant_C1"/>
</dbReference>
<dbReference type="InterPro" id="IPR001906">
    <property type="entry name" value="Terpene_synth_N"/>
</dbReference>
<dbReference type="InterPro" id="IPR036965">
    <property type="entry name" value="Terpene_synth_N_sf"/>
</dbReference>
<dbReference type="InterPro" id="IPR050148">
    <property type="entry name" value="Terpene_synthase-like"/>
</dbReference>
<dbReference type="InterPro" id="IPR005630">
    <property type="entry name" value="Terpene_synthase_metal-bd"/>
</dbReference>
<dbReference type="InterPro" id="IPR008930">
    <property type="entry name" value="Terpenoid_cyclase/PrenylTrfase"/>
</dbReference>
<dbReference type="PANTHER" id="PTHR31225:SF256">
    <property type="entry name" value="(-)-ALPHA-TERPINEOL SYNTHASE-LIKE"/>
    <property type="match status" value="1"/>
</dbReference>
<dbReference type="PANTHER" id="PTHR31225">
    <property type="entry name" value="OS04G0344100 PROTEIN-RELATED"/>
    <property type="match status" value="1"/>
</dbReference>
<dbReference type="Pfam" id="PF01397">
    <property type="entry name" value="Terpene_synth"/>
    <property type="match status" value="1"/>
</dbReference>
<dbReference type="Pfam" id="PF03936">
    <property type="entry name" value="Terpene_synth_C"/>
    <property type="match status" value="1"/>
</dbReference>
<dbReference type="SFLD" id="SFLDS00005">
    <property type="entry name" value="Isoprenoid_Synthase_Type_I"/>
    <property type="match status" value="1"/>
</dbReference>
<dbReference type="SFLD" id="SFLDG01019">
    <property type="entry name" value="Terpene_Cyclase_Like_1_C_Termi"/>
    <property type="match status" value="1"/>
</dbReference>
<dbReference type="SUPFAM" id="SSF48239">
    <property type="entry name" value="Terpenoid cyclases/Protein prenyltransferases"/>
    <property type="match status" value="1"/>
</dbReference>
<dbReference type="SUPFAM" id="SSF48576">
    <property type="entry name" value="Terpenoid synthases"/>
    <property type="match status" value="1"/>
</dbReference>